<protein>
    <recommendedName>
        <fullName evidence="1">Elongation factor 4</fullName>
        <shortName evidence="1">EF-4</shortName>
        <ecNumber evidence="1">3.6.5.n1</ecNumber>
    </recommendedName>
    <alternativeName>
        <fullName evidence="1">Ribosomal back-translocase LepA</fullName>
    </alternativeName>
</protein>
<dbReference type="EC" id="3.6.5.n1" evidence="1"/>
<dbReference type="EMBL" id="CP000076">
    <property type="protein sequence ID" value="AAY90356.2"/>
    <property type="molecule type" value="Genomic_DNA"/>
</dbReference>
<dbReference type="RefSeq" id="WP_011059419.1">
    <property type="nucleotide sequence ID" value="NC_004129.6"/>
</dbReference>
<dbReference type="SMR" id="Q4KHT3"/>
<dbReference type="STRING" id="220664.PFL_1069"/>
<dbReference type="GeneID" id="57474073"/>
<dbReference type="KEGG" id="pfl:PFL_1069"/>
<dbReference type="PATRIC" id="fig|220664.5.peg.1097"/>
<dbReference type="eggNOG" id="COG0481">
    <property type="taxonomic scope" value="Bacteria"/>
</dbReference>
<dbReference type="HOGENOM" id="CLU_009995_3_3_6"/>
<dbReference type="Proteomes" id="UP000008540">
    <property type="component" value="Chromosome"/>
</dbReference>
<dbReference type="GO" id="GO:0005886">
    <property type="term" value="C:plasma membrane"/>
    <property type="evidence" value="ECO:0007669"/>
    <property type="project" value="UniProtKB-SubCell"/>
</dbReference>
<dbReference type="GO" id="GO:0005525">
    <property type="term" value="F:GTP binding"/>
    <property type="evidence" value="ECO:0007669"/>
    <property type="project" value="UniProtKB-UniRule"/>
</dbReference>
<dbReference type="GO" id="GO:0003924">
    <property type="term" value="F:GTPase activity"/>
    <property type="evidence" value="ECO:0007669"/>
    <property type="project" value="UniProtKB-UniRule"/>
</dbReference>
<dbReference type="GO" id="GO:0097216">
    <property type="term" value="F:guanosine tetraphosphate binding"/>
    <property type="evidence" value="ECO:0007669"/>
    <property type="project" value="UniProtKB-ARBA"/>
</dbReference>
<dbReference type="GO" id="GO:0043022">
    <property type="term" value="F:ribosome binding"/>
    <property type="evidence" value="ECO:0007669"/>
    <property type="project" value="UniProtKB-UniRule"/>
</dbReference>
<dbReference type="GO" id="GO:0003746">
    <property type="term" value="F:translation elongation factor activity"/>
    <property type="evidence" value="ECO:0007669"/>
    <property type="project" value="UniProtKB-UniRule"/>
</dbReference>
<dbReference type="GO" id="GO:0045727">
    <property type="term" value="P:positive regulation of translation"/>
    <property type="evidence" value="ECO:0007669"/>
    <property type="project" value="UniProtKB-UniRule"/>
</dbReference>
<dbReference type="CDD" id="cd03699">
    <property type="entry name" value="EF4_II"/>
    <property type="match status" value="1"/>
</dbReference>
<dbReference type="CDD" id="cd16260">
    <property type="entry name" value="EF4_III"/>
    <property type="match status" value="1"/>
</dbReference>
<dbReference type="CDD" id="cd01890">
    <property type="entry name" value="LepA"/>
    <property type="match status" value="1"/>
</dbReference>
<dbReference type="CDD" id="cd03709">
    <property type="entry name" value="lepA_C"/>
    <property type="match status" value="1"/>
</dbReference>
<dbReference type="FunFam" id="3.40.50.300:FF:000078">
    <property type="entry name" value="Elongation factor 4"/>
    <property type="match status" value="1"/>
</dbReference>
<dbReference type="FunFam" id="2.40.30.10:FF:000015">
    <property type="entry name" value="Translation factor GUF1, mitochondrial"/>
    <property type="match status" value="1"/>
</dbReference>
<dbReference type="FunFam" id="3.30.70.240:FF:000007">
    <property type="entry name" value="Translation factor GUF1, mitochondrial"/>
    <property type="match status" value="1"/>
</dbReference>
<dbReference type="FunFam" id="3.30.70.2570:FF:000001">
    <property type="entry name" value="Translation factor GUF1, mitochondrial"/>
    <property type="match status" value="1"/>
</dbReference>
<dbReference type="FunFam" id="3.30.70.870:FF:000004">
    <property type="entry name" value="Translation factor GUF1, mitochondrial"/>
    <property type="match status" value="1"/>
</dbReference>
<dbReference type="Gene3D" id="3.30.70.240">
    <property type="match status" value="1"/>
</dbReference>
<dbReference type="Gene3D" id="3.30.70.2570">
    <property type="entry name" value="Elongation factor 4, C-terminal domain"/>
    <property type="match status" value="1"/>
</dbReference>
<dbReference type="Gene3D" id="3.30.70.870">
    <property type="entry name" value="Elongation Factor G (Translational Gtpase), domain 3"/>
    <property type="match status" value="1"/>
</dbReference>
<dbReference type="Gene3D" id="3.40.50.300">
    <property type="entry name" value="P-loop containing nucleotide triphosphate hydrolases"/>
    <property type="match status" value="1"/>
</dbReference>
<dbReference type="Gene3D" id="2.40.30.10">
    <property type="entry name" value="Translation factors"/>
    <property type="match status" value="1"/>
</dbReference>
<dbReference type="HAMAP" id="MF_00071">
    <property type="entry name" value="LepA"/>
    <property type="match status" value="1"/>
</dbReference>
<dbReference type="InterPro" id="IPR006297">
    <property type="entry name" value="EF-4"/>
</dbReference>
<dbReference type="InterPro" id="IPR035647">
    <property type="entry name" value="EFG_III/V"/>
</dbReference>
<dbReference type="InterPro" id="IPR000640">
    <property type="entry name" value="EFG_V-like"/>
</dbReference>
<dbReference type="InterPro" id="IPR004161">
    <property type="entry name" value="EFTu-like_2"/>
</dbReference>
<dbReference type="InterPro" id="IPR038363">
    <property type="entry name" value="LepA_C_sf"/>
</dbReference>
<dbReference type="InterPro" id="IPR013842">
    <property type="entry name" value="LepA_CTD"/>
</dbReference>
<dbReference type="InterPro" id="IPR035654">
    <property type="entry name" value="LepA_IV"/>
</dbReference>
<dbReference type="InterPro" id="IPR027417">
    <property type="entry name" value="P-loop_NTPase"/>
</dbReference>
<dbReference type="InterPro" id="IPR005225">
    <property type="entry name" value="Small_GTP-bd"/>
</dbReference>
<dbReference type="InterPro" id="IPR000795">
    <property type="entry name" value="T_Tr_GTP-bd_dom"/>
</dbReference>
<dbReference type="NCBIfam" id="TIGR01393">
    <property type="entry name" value="lepA"/>
    <property type="match status" value="1"/>
</dbReference>
<dbReference type="NCBIfam" id="TIGR00231">
    <property type="entry name" value="small_GTP"/>
    <property type="match status" value="1"/>
</dbReference>
<dbReference type="PANTHER" id="PTHR43512:SF4">
    <property type="entry name" value="TRANSLATION FACTOR GUF1 HOMOLOG, CHLOROPLASTIC"/>
    <property type="match status" value="1"/>
</dbReference>
<dbReference type="PANTHER" id="PTHR43512">
    <property type="entry name" value="TRANSLATION FACTOR GUF1-RELATED"/>
    <property type="match status" value="1"/>
</dbReference>
<dbReference type="Pfam" id="PF00679">
    <property type="entry name" value="EFG_C"/>
    <property type="match status" value="1"/>
</dbReference>
<dbReference type="Pfam" id="PF00009">
    <property type="entry name" value="GTP_EFTU"/>
    <property type="match status" value="1"/>
</dbReference>
<dbReference type="Pfam" id="PF03144">
    <property type="entry name" value="GTP_EFTU_D2"/>
    <property type="match status" value="1"/>
</dbReference>
<dbReference type="Pfam" id="PF06421">
    <property type="entry name" value="LepA_C"/>
    <property type="match status" value="1"/>
</dbReference>
<dbReference type="PRINTS" id="PR00315">
    <property type="entry name" value="ELONGATNFCT"/>
</dbReference>
<dbReference type="SUPFAM" id="SSF54980">
    <property type="entry name" value="EF-G C-terminal domain-like"/>
    <property type="match status" value="2"/>
</dbReference>
<dbReference type="SUPFAM" id="SSF52540">
    <property type="entry name" value="P-loop containing nucleoside triphosphate hydrolases"/>
    <property type="match status" value="1"/>
</dbReference>
<dbReference type="PROSITE" id="PS51722">
    <property type="entry name" value="G_TR_2"/>
    <property type="match status" value="1"/>
</dbReference>
<sequence>MSDLSHIRNFSIIAHIDHGKSTLADRFIQMCGGLAEREMEAQVLDSMDLERERGITIKAHSVTLYYKARDGITYQLNFIDTPGHVDFTYEVSRSLAACEGALLVVDAGQGVEAQSVANCYTAIEQGLEVMPVLNKIDLPQADPERVKEEIEKIIGIDATDAVTCSAKTGLGVDEVLERLVTTIPAPTGNIEDPLQALIIDSWFDNYLGVVSLVRVRHGRVKKGDKILVKSTGKIHLVDSVGVFNPKHTATTDLKAGEVGFIIAGIKDIHGAPVGDTLTLSSTPDVEVLPGFKRIQPQVYAGLFPVSSDDFEDFREALQKLTLNDSSLQYTPESSDALGFGFRCGFLGMLHMEIIQERLEREYDLDLITTAPTVIFELQLKNGETIYVDNPSKLPDLSAIEDMREPIVRANILVPQEHLGNVITLCIEKRGVQHDMLFLGSQVQVTYDLPMNEVVLDFFDRLKSTSRGYASLDYHFDRYQSANLVKLDVLINGEKVDALALIVHRDNAHYKGRALTEKMKELIPRQMFDVAIQAAIGGQIVARTTVKALRKNVLAKCYGGDVSRKRKLLEKQKAGKKRMKQVGNVEIPQEAFLAVLRLDS</sequence>
<name>LEPA_PSEF5</name>
<feature type="chain" id="PRO_0000224784" description="Elongation factor 4">
    <location>
        <begin position="1"/>
        <end position="599"/>
    </location>
</feature>
<feature type="domain" description="tr-type G">
    <location>
        <begin position="5"/>
        <end position="187"/>
    </location>
</feature>
<feature type="binding site" evidence="1">
    <location>
        <begin position="17"/>
        <end position="22"/>
    </location>
    <ligand>
        <name>GTP</name>
        <dbReference type="ChEBI" id="CHEBI:37565"/>
    </ligand>
</feature>
<feature type="binding site" evidence="1">
    <location>
        <begin position="134"/>
        <end position="137"/>
    </location>
    <ligand>
        <name>GTP</name>
        <dbReference type="ChEBI" id="CHEBI:37565"/>
    </ligand>
</feature>
<comment type="function">
    <text evidence="1">Required for accurate and efficient protein synthesis under certain stress conditions. May act as a fidelity factor of the translation reaction, by catalyzing a one-codon backward translocation of tRNAs on improperly translocated ribosomes. Back-translocation proceeds from a post-translocation (POST) complex to a pre-translocation (PRE) complex, thus giving elongation factor G a second chance to translocate the tRNAs correctly. Binds to ribosomes in a GTP-dependent manner.</text>
</comment>
<comment type="catalytic activity">
    <reaction evidence="1">
        <text>GTP + H2O = GDP + phosphate + H(+)</text>
        <dbReference type="Rhea" id="RHEA:19669"/>
        <dbReference type="ChEBI" id="CHEBI:15377"/>
        <dbReference type="ChEBI" id="CHEBI:15378"/>
        <dbReference type="ChEBI" id="CHEBI:37565"/>
        <dbReference type="ChEBI" id="CHEBI:43474"/>
        <dbReference type="ChEBI" id="CHEBI:58189"/>
        <dbReference type="EC" id="3.6.5.n1"/>
    </reaction>
</comment>
<comment type="subcellular location">
    <subcellularLocation>
        <location evidence="1">Cell inner membrane</location>
        <topology evidence="1">Peripheral membrane protein</topology>
        <orientation evidence="1">Cytoplasmic side</orientation>
    </subcellularLocation>
</comment>
<comment type="similarity">
    <text evidence="1">Belongs to the TRAFAC class translation factor GTPase superfamily. Classic translation factor GTPase family. LepA subfamily.</text>
</comment>
<evidence type="ECO:0000255" key="1">
    <source>
        <dbReference type="HAMAP-Rule" id="MF_00071"/>
    </source>
</evidence>
<gene>
    <name evidence="1" type="primary">lepA</name>
    <name type="ordered locus">PFL_1069</name>
</gene>
<keyword id="KW-0997">Cell inner membrane</keyword>
<keyword id="KW-1003">Cell membrane</keyword>
<keyword id="KW-0342">GTP-binding</keyword>
<keyword id="KW-0378">Hydrolase</keyword>
<keyword id="KW-0472">Membrane</keyword>
<keyword id="KW-0547">Nucleotide-binding</keyword>
<keyword id="KW-0648">Protein biosynthesis</keyword>
<organism>
    <name type="scientific">Pseudomonas fluorescens (strain ATCC BAA-477 / NRRL B-23932 / Pf-5)</name>
    <dbReference type="NCBI Taxonomy" id="220664"/>
    <lineage>
        <taxon>Bacteria</taxon>
        <taxon>Pseudomonadati</taxon>
        <taxon>Pseudomonadota</taxon>
        <taxon>Gammaproteobacteria</taxon>
        <taxon>Pseudomonadales</taxon>
        <taxon>Pseudomonadaceae</taxon>
        <taxon>Pseudomonas</taxon>
    </lineage>
</organism>
<reference key="1">
    <citation type="journal article" date="2005" name="Nat. Biotechnol.">
        <title>Complete genome sequence of the plant commensal Pseudomonas fluorescens Pf-5.</title>
        <authorList>
            <person name="Paulsen I.T."/>
            <person name="Press C.M."/>
            <person name="Ravel J."/>
            <person name="Kobayashi D.Y."/>
            <person name="Myers G.S.A."/>
            <person name="Mavrodi D.V."/>
            <person name="DeBoy R.T."/>
            <person name="Seshadri R."/>
            <person name="Ren Q."/>
            <person name="Madupu R."/>
            <person name="Dodson R.J."/>
            <person name="Durkin A.S."/>
            <person name="Brinkac L.M."/>
            <person name="Daugherty S.C."/>
            <person name="Sullivan S.A."/>
            <person name="Rosovitz M.J."/>
            <person name="Gwinn M.L."/>
            <person name="Zhou L."/>
            <person name="Schneider D.J."/>
            <person name="Cartinhour S.W."/>
            <person name="Nelson W.C."/>
            <person name="Weidman J."/>
            <person name="Watkins K."/>
            <person name="Tran K."/>
            <person name="Khouri H."/>
            <person name="Pierson E.A."/>
            <person name="Pierson L.S. III"/>
            <person name="Thomashow L.S."/>
            <person name="Loper J.E."/>
        </authorList>
    </citation>
    <scope>NUCLEOTIDE SEQUENCE [LARGE SCALE GENOMIC DNA]</scope>
    <source>
        <strain>ATCC BAA-477 / NRRL B-23932 / Pf-5</strain>
    </source>
</reference>
<proteinExistence type="inferred from homology"/>
<accession>Q4KHT3</accession>